<comment type="function">
    <text evidence="1">Involved in DNA recombination.</text>
</comment>
<comment type="similarity">
    <text evidence="3">Belongs to the RmuC family.</text>
</comment>
<proteinExistence type="inferred from homology"/>
<name>RMUC_NEIMA</name>
<accession>Q9JWG3</accession>
<accession>A1IPK8</accession>
<feature type="chain" id="PRO_0000202045" description="DNA recombination protein RmuC homolog">
    <location>
        <begin position="1"/>
        <end position="594"/>
    </location>
</feature>
<feature type="coiled-coil region" evidence="2">
    <location>
        <begin position="31"/>
        <end position="330"/>
    </location>
</feature>
<gene>
    <name type="primary">rmuC</name>
    <name type="ordered locus">NMA0386</name>
</gene>
<evidence type="ECO:0000250" key="1"/>
<evidence type="ECO:0000255" key="2"/>
<evidence type="ECO:0000305" key="3"/>
<reference key="1">
    <citation type="journal article" date="2000" name="Nature">
        <title>Complete DNA sequence of a serogroup A strain of Neisseria meningitidis Z2491.</title>
        <authorList>
            <person name="Parkhill J."/>
            <person name="Achtman M."/>
            <person name="James K.D."/>
            <person name="Bentley S.D."/>
            <person name="Churcher C.M."/>
            <person name="Klee S.R."/>
            <person name="Morelli G."/>
            <person name="Basham D."/>
            <person name="Brown D."/>
            <person name="Chillingworth T."/>
            <person name="Davies R.M."/>
            <person name="Davis P."/>
            <person name="Devlin K."/>
            <person name="Feltwell T."/>
            <person name="Hamlin N."/>
            <person name="Holroyd S."/>
            <person name="Jagels K."/>
            <person name="Leather S."/>
            <person name="Moule S."/>
            <person name="Mungall K.L."/>
            <person name="Quail M.A."/>
            <person name="Rajandream M.A."/>
            <person name="Rutherford K.M."/>
            <person name="Simmonds M."/>
            <person name="Skelton J."/>
            <person name="Whitehead S."/>
            <person name="Spratt B.G."/>
            <person name="Barrell B.G."/>
        </authorList>
    </citation>
    <scope>NUCLEOTIDE SEQUENCE [LARGE SCALE GENOMIC DNA]</scope>
    <source>
        <strain>DSM 15465 / Z2491</strain>
    </source>
</reference>
<sequence length="594" mass="66747">MELMTVLLPLAALVSGVLFTWLLMKGRFQGEFADLNAQLAEKAARCDFVEQAHAEIASELAVLDGKYRHLQDENYALGNRFSAAEKQIAHLQEKEAESVRLKQSYIELQEKAQGLAVENERLATQLGQERKAFADQYALERQIRQRIETDLEESRQTVRDVQNDLADVGNRFAAAEKQIAHLQEKEAEAERLRQSHTELQEKAQGLAVENERLATQIEQERLASEEKLSLLGEARKSLSDQFQNLANTILEEKSRRFTEQNREQLHQVLNPLNERIQGFGELVKQTYDKESRERLTLENELKRLQGLNAQLHSEAKALTNALTGTQNKVQGNWGEMILETVLENSGLQKGREYVVQAASVRKEEDGGTRRLQPDVLVNLPDNKQIVIDSKVSLTAYVRYTQAADADTAARELAAHVASIRAHMKGLSLKDYTDLEGVNTLDFVFMFIPVEPAYLLALQNDAGLFQECFDKRIMLVGPSTLLATLRTVANIWRNEQQNQNALAIADEGGKLYDKFVGFVQTLESVGKGIDQAQNSFQTAFKQLAEGRGNLVGRAEKLRLLGVKANKQLARDLTERANETTALSESLEYVAEDEAV</sequence>
<dbReference type="EMBL" id="AL157959">
    <property type="protein sequence ID" value="CAM07678.1"/>
    <property type="molecule type" value="Genomic_DNA"/>
</dbReference>
<dbReference type="PIR" id="H81954">
    <property type="entry name" value="H81954"/>
</dbReference>
<dbReference type="RefSeq" id="WP_002237387.1">
    <property type="nucleotide sequence ID" value="NC_003116.1"/>
</dbReference>
<dbReference type="SMR" id="Q9JWG3"/>
<dbReference type="EnsemblBacteria" id="CAM07678">
    <property type="protein sequence ID" value="CAM07678"/>
    <property type="gene ID" value="NMA0386"/>
</dbReference>
<dbReference type="GeneID" id="93386977"/>
<dbReference type="KEGG" id="nma:NMA0386"/>
<dbReference type="HOGENOM" id="CLU_024057_0_0_4"/>
<dbReference type="Proteomes" id="UP000000626">
    <property type="component" value="Chromosome"/>
</dbReference>
<dbReference type="GO" id="GO:0006310">
    <property type="term" value="P:DNA recombination"/>
    <property type="evidence" value="ECO:0007669"/>
    <property type="project" value="UniProtKB-KW"/>
</dbReference>
<dbReference type="InterPro" id="IPR003798">
    <property type="entry name" value="DNA_recombination_RmuC"/>
</dbReference>
<dbReference type="PANTHER" id="PTHR30563">
    <property type="entry name" value="DNA RECOMBINATION PROTEIN RMUC"/>
    <property type="match status" value="1"/>
</dbReference>
<dbReference type="PANTHER" id="PTHR30563:SF0">
    <property type="entry name" value="DNA RECOMBINATION PROTEIN RMUC"/>
    <property type="match status" value="1"/>
</dbReference>
<dbReference type="Pfam" id="PF02646">
    <property type="entry name" value="RmuC"/>
    <property type="match status" value="1"/>
</dbReference>
<keyword id="KW-0175">Coiled coil</keyword>
<keyword id="KW-0233">DNA recombination</keyword>
<protein>
    <recommendedName>
        <fullName>DNA recombination protein RmuC homolog</fullName>
    </recommendedName>
</protein>
<organism>
    <name type="scientific">Neisseria meningitidis serogroup A / serotype 4A (strain DSM 15465 / Z2491)</name>
    <dbReference type="NCBI Taxonomy" id="122587"/>
    <lineage>
        <taxon>Bacteria</taxon>
        <taxon>Pseudomonadati</taxon>
        <taxon>Pseudomonadota</taxon>
        <taxon>Betaproteobacteria</taxon>
        <taxon>Neisseriales</taxon>
        <taxon>Neisseriaceae</taxon>
        <taxon>Neisseria</taxon>
    </lineage>
</organism>